<accession>P83564</accession>
<accession>A8IAD7</accession>
<protein>
    <recommendedName>
        <fullName evidence="6">Glutathione peroxidase 1, mitochondrial</fullName>
        <shortName evidence="6">CrGPx1</shortName>
        <ecNumber evidence="3">1.11.1.9</ecNumber>
    </recommendedName>
</protein>
<comment type="function">
    <text evidence="3">May constitute a glutathione peroxidase-like protective system against oxidative stresses. Hydrogen peroxide, tert-butyl hydroperoxide and cumene, but not phosphatidylcholine hydroperoxide, can act as acceptors.</text>
</comment>
<comment type="catalytic activity">
    <reaction evidence="3">
        <text>2 glutathione + H2O2 = glutathione disulfide + 2 H2O</text>
        <dbReference type="Rhea" id="RHEA:16833"/>
        <dbReference type="ChEBI" id="CHEBI:15377"/>
        <dbReference type="ChEBI" id="CHEBI:16240"/>
        <dbReference type="ChEBI" id="CHEBI:57925"/>
        <dbReference type="ChEBI" id="CHEBI:58297"/>
        <dbReference type="EC" id="1.11.1.9"/>
    </reaction>
</comment>
<comment type="subcellular location">
    <subcellularLocation>
        <location evidence="8">Mitochondrion</location>
    </subcellularLocation>
</comment>
<comment type="induction">
    <text evidence="3 5">By selenium, particularly under autotrophic conditions (PubMed:11973339). Repressed by photooxidative stress (by rose bengal) (PubMed:32344528).</text>
</comment>
<comment type="mass spectrometry" mass="18496.0" method="MALDI" evidence="3"/>
<comment type="mass spectrometry" mass="18571.0" method="Electrospray" evidence="3"/>
<comment type="similarity">
    <text evidence="8">Belongs to the glutathione peroxidase family.</text>
</comment>
<sequence length="201" mass="21499">MLLTRKNVAVRPARAARRDVRAMSLLGNLFGGGSKPTSSTSNFHQLSALDIDKKNVDFKSLNNRVVLVVNVASKUGLTAANYKEFATLLGKYPATDLTIVAFPCNQFGGQEPGTNAEIKAFASARGFSGAGALLMDKVDVNGANASPVYNFLKVAAGDTSDIGWNFGKFLVRPDGTVFGRYAPTTGPLSLEKYIVELINSR</sequence>
<feature type="transit peptide" description="Mitochondrion">
    <location>
        <begin position="1"/>
        <end position="27"/>
    </location>
</feature>
<feature type="chain" id="PRO_0000013089" description="Glutathione peroxidase 1, mitochondrial" evidence="2">
    <location>
        <begin position="28"/>
        <end position="201"/>
    </location>
</feature>
<feature type="active site" evidence="1">
    <location>
        <position position="75"/>
    </location>
</feature>
<feature type="non-standard amino acid" description="Selenocysteine" evidence="3 4">
    <location>
        <position position="75"/>
    </location>
</feature>
<proteinExistence type="evidence at protein level"/>
<name>GPX1_CHLRE</name>
<reference evidence="8" key="1">
    <citation type="journal article" date="2002" name="J. Biol. Chem.">
        <title>A selenoprotein in the plant kingdom. Mass spectrometry confirms that an opal codon (UGA) encodes selenocysteine in Chlamydomonas reinhardtii glutathione peroxidase.</title>
        <authorList>
            <person name="Fu L.-H."/>
            <person name="Wang X.-F."/>
            <person name="Eyal Y."/>
            <person name="She Y.-M."/>
            <person name="Donald L.J."/>
            <person name="Standing K.G."/>
            <person name="Ben-Hayyim G."/>
        </authorList>
    </citation>
    <scope>NUCLEOTIDE SEQUENCE [MRNA]</scope>
    <scope>FUNCTION</scope>
    <scope>CATALYTIC ACTIVITY</scope>
    <scope>INDUCTION</scope>
    <scope>SELENOCYSTEINE AT SEC-75</scope>
    <scope>MASS SPECTROMETRY</scope>
    <source>
        <strain>2137</strain>
    </source>
</reference>
<reference evidence="10" key="2">
    <citation type="journal article" date="2007" name="Science">
        <title>The Chlamydomonas genome reveals the evolution of key animal and plant functions.</title>
        <authorList>
            <person name="Merchant S.S."/>
            <person name="Prochnik S.E."/>
            <person name="Vallon O."/>
            <person name="Harris E.H."/>
            <person name="Karpowicz S.J."/>
            <person name="Witman G.B."/>
            <person name="Terry A."/>
            <person name="Salamov A."/>
            <person name="Fritz-Laylin L.K."/>
            <person name="Marechal-Drouard L."/>
            <person name="Marshall W.F."/>
            <person name="Qu L.H."/>
            <person name="Nelson D.R."/>
            <person name="Sanderfoot A.A."/>
            <person name="Spalding M.H."/>
            <person name="Kapitonov V.V."/>
            <person name="Ren Q."/>
            <person name="Ferris P."/>
            <person name="Lindquist E."/>
            <person name="Shapiro H."/>
            <person name="Lucas S.M."/>
            <person name="Grimwood J."/>
            <person name="Schmutz J."/>
            <person name="Cardol P."/>
            <person name="Cerutti H."/>
            <person name="Chanfreau G."/>
            <person name="Chen C.L."/>
            <person name="Cognat V."/>
            <person name="Croft M.T."/>
            <person name="Dent R."/>
            <person name="Dutcher S."/>
            <person name="Fernandez E."/>
            <person name="Fukuzawa H."/>
            <person name="Gonzalez-Ballester D."/>
            <person name="Gonzalez-Halphen D."/>
            <person name="Hallmann A."/>
            <person name="Hanikenne M."/>
            <person name="Hippler M."/>
            <person name="Inwood W."/>
            <person name="Jabbari K."/>
            <person name="Kalanon M."/>
            <person name="Kuras R."/>
            <person name="Lefebvre P.A."/>
            <person name="Lemaire S.D."/>
            <person name="Lobanov A.V."/>
            <person name="Lohr M."/>
            <person name="Manuell A."/>
            <person name="Meier I."/>
            <person name="Mets L."/>
            <person name="Mittag M."/>
            <person name="Mittelmeier T."/>
            <person name="Moroney J.V."/>
            <person name="Moseley J."/>
            <person name="Napoli C."/>
            <person name="Nedelcu A.M."/>
            <person name="Niyogi K."/>
            <person name="Novoselov S.V."/>
            <person name="Paulsen I.T."/>
            <person name="Pazour G.J."/>
            <person name="Purton S."/>
            <person name="Ral J.P."/>
            <person name="Riano-Pachon D.M."/>
            <person name="Riekhof W."/>
            <person name="Rymarquis L."/>
            <person name="Schroda M."/>
            <person name="Stern D."/>
            <person name="Umen J."/>
            <person name="Willows R."/>
            <person name="Wilson N."/>
            <person name="Zimmer S.L."/>
            <person name="Allmer J."/>
            <person name="Balk J."/>
            <person name="Bisova K."/>
            <person name="Chen C.J."/>
            <person name="Elias M."/>
            <person name="Gendler K."/>
            <person name="Hauser C."/>
            <person name="Lamb M.R."/>
            <person name="Ledford H."/>
            <person name="Long J.C."/>
            <person name="Minagawa J."/>
            <person name="Page M.D."/>
            <person name="Pan J."/>
            <person name="Pootakham W."/>
            <person name="Roje S."/>
            <person name="Rose A."/>
            <person name="Stahlberg E."/>
            <person name="Terauchi A.M."/>
            <person name="Yang P."/>
            <person name="Ball S."/>
            <person name="Bowler C."/>
            <person name="Dieckmann C.L."/>
            <person name="Gladyshev V.N."/>
            <person name="Green P."/>
            <person name="Jorgensen R."/>
            <person name="Mayfield S."/>
            <person name="Mueller-Roeber B."/>
            <person name="Rajamani S."/>
            <person name="Sayre R.T."/>
            <person name="Brokstein P."/>
            <person name="Dubchak I."/>
            <person name="Goodstein D."/>
            <person name="Hornick L."/>
            <person name="Huang Y.W."/>
            <person name="Jhaveri J."/>
            <person name="Luo Y."/>
            <person name="Martinez D."/>
            <person name="Ngau W.C."/>
            <person name="Otillar B."/>
            <person name="Poliakov A."/>
            <person name="Porter A."/>
            <person name="Szajkowski L."/>
            <person name="Werner G."/>
            <person name="Zhou K."/>
            <person name="Grigoriev I.V."/>
            <person name="Rokhsar D.S."/>
            <person name="Grossman A.R."/>
        </authorList>
    </citation>
    <scope>NUCLEOTIDE SEQUENCE [LARGE SCALE GENOMIC DNA]</scope>
    <source>
        <strain>CC-503</strain>
    </source>
</reference>
<reference evidence="8" key="3">
    <citation type="journal article" date="2002" name="EMBO J.">
        <title>Selenoproteins and selenocysteine insertion system in the model plant cell system, Chlamydomonas reinhardtii.</title>
        <authorList>
            <person name="Novoselov S.V."/>
            <person name="Rao M."/>
            <person name="Onoshko N.V."/>
            <person name="Zhi H."/>
            <person name="Kryukov G.V."/>
            <person name="Xiang Y."/>
            <person name="Weeks D.P."/>
            <person name="Hatfield D.L."/>
            <person name="Gladyshev V.N."/>
        </authorList>
    </citation>
    <scope>IDENTIFICATION BY MASS SPECTROMETRY</scope>
    <scope>SELENOCYSTEINE AT SEC-75</scope>
</reference>
<reference key="4">
    <citation type="journal article" date="2020" name="Genes (Basel)">
        <title>Transcriptomic and Physiological Responses to Oxidative Stress in a Chlamydomonas reinhardtii Glutathione Peroxidase Mutant.</title>
        <authorList>
            <person name="Ma X."/>
            <person name="Zhang B."/>
            <person name="Miao R."/>
            <person name="Deng X."/>
            <person name="Duan Y."/>
            <person name="Cheng Y."/>
            <person name="Zhang W."/>
            <person name="Shi M."/>
            <person name="Huang K."/>
            <person name="Xia X.Q."/>
        </authorList>
    </citation>
    <scope>INDUCTION</scope>
</reference>
<organism>
    <name type="scientific">Chlamydomonas reinhardtii</name>
    <name type="common">Chlamydomonas smithii</name>
    <dbReference type="NCBI Taxonomy" id="3055"/>
    <lineage>
        <taxon>Eukaryota</taxon>
        <taxon>Viridiplantae</taxon>
        <taxon>Chlorophyta</taxon>
        <taxon>core chlorophytes</taxon>
        <taxon>Chlorophyceae</taxon>
        <taxon>CS clade</taxon>
        <taxon>Chlamydomonadales</taxon>
        <taxon>Chlamydomonadaceae</taxon>
        <taxon>Chlamydomonas</taxon>
    </lineage>
</organism>
<gene>
    <name evidence="9" type="primary">GPX</name>
    <name evidence="7" type="synonym">PHGPX1</name>
    <name type="ORF">CHLREDRAFT_206090</name>
</gene>
<evidence type="ECO:0000250" key="1">
    <source>
        <dbReference type="UniProtKB" id="O70325"/>
    </source>
</evidence>
<evidence type="ECO:0000255" key="2"/>
<evidence type="ECO:0000269" key="3">
    <source>
    </source>
</evidence>
<evidence type="ECO:0000269" key="4">
    <source>
    </source>
</evidence>
<evidence type="ECO:0000269" key="5">
    <source>
    </source>
</evidence>
<evidence type="ECO:0000303" key="6">
    <source>
    </source>
</evidence>
<evidence type="ECO:0000303" key="7">
    <source>
    </source>
</evidence>
<evidence type="ECO:0000305" key="8"/>
<evidence type="ECO:0000312" key="9">
    <source>
        <dbReference type="EMBL" id="AAL14348.1"/>
    </source>
</evidence>
<evidence type="ECO:0000312" key="10">
    <source>
        <dbReference type="EMBL" id="EDP06633.1"/>
    </source>
</evidence>
<keyword id="KW-0216">Detoxification</keyword>
<keyword id="KW-0496">Mitochondrion</keyword>
<keyword id="KW-0560">Oxidoreductase</keyword>
<keyword id="KW-0575">Peroxidase</keyword>
<keyword id="KW-0711">Selenium</keyword>
<keyword id="KW-0712">Selenocysteine</keyword>
<keyword id="KW-0809">Transit peptide</keyword>
<dbReference type="EC" id="1.11.1.9" evidence="3"/>
<dbReference type="EMBL" id="AY051144">
    <property type="protein sequence ID" value="AAL14348.1"/>
    <property type="molecule type" value="mRNA"/>
</dbReference>
<dbReference type="EMBL" id="DS496114">
    <property type="protein sequence ID" value="EDP06633.1"/>
    <property type="molecule type" value="Genomic_DNA"/>
</dbReference>
<dbReference type="RefSeq" id="XP_001701658.1">
    <property type="nucleotide sequence ID" value="XM_001701606.1"/>
</dbReference>
<dbReference type="PeroxiBase" id="2590">
    <property type="entry name" value="CreGPx02"/>
</dbReference>
<dbReference type="PaxDb" id="3055-EDP06633"/>
<dbReference type="GeneID" id="5727250"/>
<dbReference type="KEGG" id="cre:CHLRE_02g078300v5"/>
<dbReference type="eggNOG" id="KOG1651">
    <property type="taxonomic scope" value="Eukaryota"/>
</dbReference>
<dbReference type="HOGENOM" id="CLU_029507_0_1_1"/>
<dbReference type="OrthoDB" id="446890at2759"/>
<dbReference type="GO" id="GO:0005739">
    <property type="term" value="C:mitochondrion"/>
    <property type="evidence" value="ECO:0000303"/>
    <property type="project" value="UniProtKB"/>
</dbReference>
<dbReference type="GO" id="GO:0004602">
    <property type="term" value="F:glutathione peroxidase activity"/>
    <property type="evidence" value="ECO:0000314"/>
    <property type="project" value="UniProtKB"/>
</dbReference>
<dbReference type="GO" id="GO:0047066">
    <property type="term" value="F:phospholipid-hydroperoxide glutathione peroxidase activity"/>
    <property type="evidence" value="ECO:0000250"/>
    <property type="project" value="UniProtKB"/>
</dbReference>
<dbReference type="GO" id="GO:0019369">
    <property type="term" value="P:arachidonate metabolic process"/>
    <property type="evidence" value="ECO:0000250"/>
    <property type="project" value="UniProtKB"/>
</dbReference>
<dbReference type="GO" id="GO:0019372">
    <property type="term" value="P:lipoxygenase pathway"/>
    <property type="evidence" value="ECO:0000250"/>
    <property type="project" value="UniProtKB"/>
</dbReference>
<dbReference type="GO" id="GO:0006979">
    <property type="term" value="P:response to oxidative stress"/>
    <property type="evidence" value="ECO:0000314"/>
    <property type="project" value="UniProtKB"/>
</dbReference>
<dbReference type="CDD" id="cd00340">
    <property type="entry name" value="GSH_Peroxidase"/>
    <property type="match status" value="1"/>
</dbReference>
<dbReference type="FunFam" id="3.40.30.10:FF:000314">
    <property type="entry name" value="Glutathione peroxidase"/>
    <property type="match status" value="1"/>
</dbReference>
<dbReference type="Gene3D" id="3.40.30.10">
    <property type="entry name" value="Glutaredoxin"/>
    <property type="match status" value="1"/>
</dbReference>
<dbReference type="InterPro" id="IPR000889">
    <property type="entry name" value="Glutathione_peroxidase"/>
</dbReference>
<dbReference type="InterPro" id="IPR029759">
    <property type="entry name" value="GPX_AS"/>
</dbReference>
<dbReference type="InterPro" id="IPR029760">
    <property type="entry name" value="GPX_CS"/>
</dbReference>
<dbReference type="InterPro" id="IPR036249">
    <property type="entry name" value="Thioredoxin-like_sf"/>
</dbReference>
<dbReference type="PANTHER" id="PTHR11592">
    <property type="entry name" value="GLUTATHIONE PEROXIDASE"/>
    <property type="match status" value="1"/>
</dbReference>
<dbReference type="PANTHER" id="PTHR11592:SF78">
    <property type="entry name" value="GLUTATHIONE PEROXIDASE"/>
    <property type="match status" value="1"/>
</dbReference>
<dbReference type="Pfam" id="PF00255">
    <property type="entry name" value="GSHPx"/>
    <property type="match status" value="1"/>
</dbReference>
<dbReference type="PIRSF" id="PIRSF000303">
    <property type="entry name" value="Glutathion_perox"/>
    <property type="match status" value="1"/>
</dbReference>
<dbReference type="PRINTS" id="PR01011">
    <property type="entry name" value="GLUTPROXDASE"/>
</dbReference>
<dbReference type="SUPFAM" id="SSF52833">
    <property type="entry name" value="Thioredoxin-like"/>
    <property type="match status" value="1"/>
</dbReference>
<dbReference type="PROSITE" id="PS00460">
    <property type="entry name" value="GLUTATHIONE_PEROXID_1"/>
    <property type="match status" value="1"/>
</dbReference>
<dbReference type="PROSITE" id="PS00763">
    <property type="entry name" value="GLUTATHIONE_PEROXID_2"/>
    <property type="match status" value="1"/>
</dbReference>
<dbReference type="PROSITE" id="PS51355">
    <property type="entry name" value="GLUTATHIONE_PEROXID_3"/>
    <property type="match status" value="1"/>
</dbReference>